<proteinExistence type="evidence at protein level"/>
<organism>
    <name type="scientific">Saccharomyces cerevisiae (strain ATCC 204508 / S288c)</name>
    <name type="common">Baker's yeast</name>
    <dbReference type="NCBI Taxonomy" id="559292"/>
    <lineage>
        <taxon>Eukaryota</taxon>
        <taxon>Fungi</taxon>
        <taxon>Dikarya</taxon>
        <taxon>Ascomycota</taxon>
        <taxon>Saccharomycotina</taxon>
        <taxon>Saccharomycetes</taxon>
        <taxon>Saccharomycetales</taxon>
        <taxon>Saccharomycetaceae</taxon>
        <taxon>Saccharomyces</taxon>
    </lineage>
</organism>
<feature type="chain" id="PRO_0000122455" description="Obg-like ATPase homolog">
    <location>
        <begin position="1"/>
        <end position="405"/>
    </location>
</feature>
<feature type="domain" description="OBG-type G" evidence="2">
    <location>
        <begin position="17"/>
        <end position="283"/>
    </location>
</feature>
<feature type="domain" description="TGS" evidence="3">
    <location>
        <begin position="312"/>
        <end position="398"/>
    </location>
</feature>
<feature type="binding site" evidence="2">
    <location>
        <begin position="26"/>
        <end position="31"/>
    </location>
    <ligand>
        <name>ATP</name>
        <dbReference type="ChEBI" id="CHEBI:30616"/>
    </ligand>
</feature>
<feature type="binding site" evidence="1">
    <location>
        <position position="231"/>
    </location>
    <ligand>
        <name>ATP</name>
        <dbReference type="ChEBI" id="CHEBI:30616"/>
    </ligand>
</feature>
<feature type="sequence conflict" description="In Ref. 1; CAA82332." evidence="6" ref="1">
    <original>S</original>
    <variation>T</variation>
    <location>
        <position position="63"/>
    </location>
</feature>
<feature type="sequence conflict" description="In Ref. 1; CAA82332." evidence="6" ref="1">
    <original>L</original>
    <variation>F</variation>
    <location>
        <position position="149"/>
    </location>
</feature>
<feature type="sequence conflict" description="In Ref. 1; CAA82332." evidence="6" ref="1">
    <original>E</original>
    <variation>A</variation>
    <location>
        <position position="323"/>
    </location>
</feature>
<gene>
    <name type="primary">YLF2</name>
    <name type="ordered locus">YHL014C</name>
</gene>
<keyword id="KW-0067">ATP-binding</keyword>
<keyword id="KW-0342">GTP-binding</keyword>
<keyword id="KW-0496">Mitochondrion</keyword>
<keyword id="KW-0547">Nucleotide-binding</keyword>
<keyword id="KW-1185">Reference proteome</keyword>
<accession>P38746</accession>
<accession>D3DKP8</accession>
<dbReference type="EMBL" id="Z29089">
    <property type="protein sequence ID" value="CAA82332.1"/>
    <property type="molecule type" value="Genomic_DNA"/>
</dbReference>
<dbReference type="EMBL" id="U11582">
    <property type="protein sequence ID" value="AAB65067.1"/>
    <property type="molecule type" value="Genomic_DNA"/>
</dbReference>
<dbReference type="EMBL" id="BK006934">
    <property type="protein sequence ID" value="DAA06672.1"/>
    <property type="molecule type" value="Genomic_DNA"/>
</dbReference>
<dbReference type="PIR" id="S46828">
    <property type="entry name" value="S46828"/>
</dbReference>
<dbReference type="RefSeq" id="NP_011849.1">
    <property type="nucleotide sequence ID" value="NM_001179094.1"/>
</dbReference>
<dbReference type="SMR" id="P38746"/>
<dbReference type="BioGRID" id="36409">
    <property type="interactions" value="70"/>
</dbReference>
<dbReference type="FunCoup" id="P38746">
    <property type="interactions" value="60"/>
</dbReference>
<dbReference type="IntAct" id="P38746">
    <property type="interactions" value="2"/>
</dbReference>
<dbReference type="MINT" id="P38746"/>
<dbReference type="STRING" id="4932.YHL014C"/>
<dbReference type="PaxDb" id="4932-YHL014C"/>
<dbReference type="PeptideAtlas" id="P38746"/>
<dbReference type="EnsemblFungi" id="YHL014C_mRNA">
    <property type="protein sequence ID" value="YHL014C"/>
    <property type="gene ID" value="YHL014C"/>
</dbReference>
<dbReference type="GeneID" id="856372"/>
<dbReference type="KEGG" id="sce:YHL014C"/>
<dbReference type="AGR" id="SGD:S000001006"/>
<dbReference type="SGD" id="S000001006">
    <property type="gene designation" value="YLF2"/>
</dbReference>
<dbReference type="VEuPathDB" id="FungiDB:YHL014C"/>
<dbReference type="eggNOG" id="KOG1491">
    <property type="taxonomic scope" value="Eukaryota"/>
</dbReference>
<dbReference type="GeneTree" id="ENSGT00390000000673"/>
<dbReference type="HOGENOM" id="CLU_018395_1_1_1"/>
<dbReference type="InParanoid" id="P38746"/>
<dbReference type="OMA" id="ARQWTIR"/>
<dbReference type="OrthoDB" id="424823at2759"/>
<dbReference type="BioCyc" id="YEAST:G3O-31034-MONOMER"/>
<dbReference type="BioGRID-ORCS" id="856372">
    <property type="hits" value="1 hit in 10 CRISPR screens"/>
</dbReference>
<dbReference type="PRO" id="PR:P38746"/>
<dbReference type="Proteomes" id="UP000002311">
    <property type="component" value="Chromosome VIII"/>
</dbReference>
<dbReference type="RNAct" id="P38746">
    <property type="molecule type" value="protein"/>
</dbReference>
<dbReference type="GO" id="GO:0005737">
    <property type="term" value="C:cytoplasm"/>
    <property type="evidence" value="ECO:0000318"/>
    <property type="project" value="GO_Central"/>
</dbReference>
<dbReference type="GO" id="GO:0005739">
    <property type="term" value="C:mitochondrion"/>
    <property type="evidence" value="ECO:0007005"/>
    <property type="project" value="SGD"/>
</dbReference>
<dbReference type="GO" id="GO:0005524">
    <property type="term" value="F:ATP binding"/>
    <property type="evidence" value="ECO:0007669"/>
    <property type="project" value="UniProtKB-KW"/>
</dbReference>
<dbReference type="GO" id="GO:0016887">
    <property type="term" value="F:ATP hydrolysis activity"/>
    <property type="evidence" value="ECO:0000318"/>
    <property type="project" value="GO_Central"/>
</dbReference>
<dbReference type="GO" id="GO:0005525">
    <property type="term" value="F:GTP binding"/>
    <property type="evidence" value="ECO:0000250"/>
    <property type="project" value="SGD"/>
</dbReference>
<dbReference type="CDD" id="cd04867">
    <property type="entry name" value="TGS_YchF_OLA1"/>
    <property type="match status" value="1"/>
</dbReference>
<dbReference type="CDD" id="cd01900">
    <property type="entry name" value="YchF"/>
    <property type="match status" value="1"/>
</dbReference>
<dbReference type="FunFam" id="1.10.150.300:FF:000001">
    <property type="entry name" value="Ribosome-binding ATPase YchF"/>
    <property type="match status" value="1"/>
</dbReference>
<dbReference type="FunFam" id="3.10.20.30:FF:000001">
    <property type="entry name" value="Ribosome-binding ATPase YchF"/>
    <property type="match status" value="1"/>
</dbReference>
<dbReference type="Gene3D" id="3.10.20.30">
    <property type="match status" value="1"/>
</dbReference>
<dbReference type="Gene3D" id="3.40.50.300">
    <property type="entry name" value="P-loop containing nucleotide triphosphate hydrolases"/>
    <property type="match status" value="1"/>
</dbReference>
<dbReference type="Gene3D" id="1.10.150.300">
    <property type="entry name" value="TGS-like domain"/>
    <property type="match status" value="1"/>
</dbReference>
<dbReference type="InterPro" id="IPR004396">
    <property type="entry name" value="ATPase_YchF/OLA1"/>
</dbReference>
<dbReference type="InterPro" id="IPR012675">
    <property type="entry name" value="Beta-grasp_dom_sf"/>
</dbReference>
<dbReference type="InterPro" id="IPR031167">
    <property type="entry name" value="G_OBG"/>
</dbReference>
<dbReference type="InterPro" id="IPR006073">
    <property type="entry name" value="GTP-bd"/>
</dbReference>
<dbReference type="InterPro" id="IPR027417">
    <property type="entry name" value="P-loop_NTPase"/>
</dbReference>
<dbReference type="InterPro" id="IPR004095">
    <property type="entry name" value="TGS"/>
</dbReference>
<dbReference type="InterPro" id="IPR012676">
    <property type="entry name" value="TGS-like"/>
</dbReference>
<dbReference type="InterPro" id="IPR023192">
    <property type="entry name" value="TGS-like_dom_sf"/>
</dbReference>
<dbReference type="InterPro" id="IPR013029">
    <property type="entry name" value="YchF_C"/>
</dbReference>
<dbReference type="InterPro" id="IPR041706">
    <property type="entry name" value="YchF_N"/>
</dbReference>
<dbReference type="NCBIfam" id="TIGR00092">
    <property type="entry name" value="redox-regulated ATPase YchF"/>
    <property type="match status" value="1"/>
</dbReference>
<dbReference type="PANTHER" id="PTHR23305">
    <property type="entry name" value="OBG GTPASE FAMILY"/>
    <property type="match status" value="1"/>
</dbReference>
<dbReference type="PANTHER" id="PTHR23305:SF9">
    <property type="entry name" value="OBG-LIKE ATPASE HOMOLOG"/>
    <property type="match status" value="1"/>
</dbReference>
<dbReference type="Pfam" id="PF01926">
    <property type="entry name" value="MMR_HSR1"/>
    <property type="match status" value="1"/>
</dbReference>
<dbReference type="Pfam" id="PF06071">
    <property type="entry name" value="YchF-GTPase_C"/>
    <property type="match status" value="1"/>
</dbReference>
<dbReference type="PIRSF" id="PIRSF006641">
    <property type="entry name" value="CHP00092"/>
    <property type="match status" value="1"/>
</dbReference>
<dbReference type="PRINTS" id="PR00326">
    <property type="entry name" value="GTP1OBG"/>
</dbReference>
<dbReference type="SUPFAM" id="SSF52540">
    <property type="entry name" value="P-loop containing nucleoside triphosphate hydrolases"/>
    <property type="match status" value="1"/>
</dbReference>
<dbReference type="SUPFAM" id="SSF81271">
    <property type="entry name" value="TGS-like"/>
    <property type="match status" value="1"/>
</dbReference>
<dbReference type="PROSITE" id="PS51710">
    <property type="entry name" value="G_OBG"/>
    <property type="match status" value="1"/>
</dbReference>
<dbReference type="PROSITE" id="PS51880">
    <property type="entry name" value="TGS"/>
    <property type="match status" value="1"/>
</dbReference>
<name>YLF2_YEAST</name>
<comment type="function">
    <text evidence="1">Hydrolyzes ATP, and can also hydrolyze GTP with lower efficiency. Has lower affinity for GTP (By similarity).</text>
</comment>
<comment type="subcellular location">
    <subcellularLocation>
        <location evidence="5">Mitochondrion</location>
    </subcellularLocation>
</comment>
<comment type="miscellaneous">
    <text evidence="4">Present with 2360 molecules/cell in log phase SD medium.</text>
</comment>
<comment type="similarity">
    <text evidence="2">Belongs to the TRAFAC class OBG-HflX-like GTPase superfamily. OBG GTPase family.</text>
</comment>
<reference key="1">
    <citation type="journal article" date="1994" name="J. Mol. Biol.">
        <title>Suppression of yeast RNA polymerase III mutations by the URP2 gene encoding a protein homologous to the mammalian ribosomal protein S20.</title>
        <authorList>
            <person name="Hermann-Le Denmat S."/>
            <person name="Sipickzki M."/>
            <person name="Thuriaux P."/>
        </authorList>
    </citation>
    <scope>NUCLEOTIDE SEQUENCE [GENOMIC DNA]</scope>
    <source>
        <strain>ATCC 28383 / FL100 / VTT C-80102</strain>
    </source>
</reference>
<reference key="2">
    <citation type="journal article" date="1994" name="Science">
        <title>Complete nucleotide sequence of Saccharomyces cerevisiae chromosome VIII.</title>
        <authorList>
            <person name="Johnston M."/>
            <person name="Andrews S."/>
            <person name="Brinkman R."/>
            <person name="Cooper J."/>
            <person name="Ding H."/>
            <person name="Dover J."/>
            <person name="Du Z."/>
            <person name="Favello A."/>
            <person name="Fulton L."/>
            <person name="Gattung S."/>
            <person name="Geisel C."/>
            <person name="Kirsten J."/>
            <person name="Kucaba T."/>
            <person name="Hillier L.W."/>
            <person name="Jier M."/>
            <person name="Johnston L."/>
            <person name="Langston Y."/>
            <person name="Latreille P."/>
            <person name="Louis E.J."/>
            <person name="Macri C."/>
            <person name="Mardis E."/>
            <person name="Menezes S."/>
            <person name="Mouser L."/>
            <person name="Nhan M."/>
            <person name="Rifkin L."/>
            <person name="Riles L."/>
            <person name="St Peter H."/>
            <person name="Trevaskis E."/>
            <person name="Vaughan K."/>
            <person name="Vignati D."/>
            <person name="Wilcox L."/>
            <person name="Wohldman P."/>
            <person name="Waterston R."/>
            <person name="Wilson R."/>
            <person name="Vaudin M."/>
        </authorList>
    </citation>
    <scope>NUCLEOTIDE SEQUENCE [LARGE SCALE GENOMIC DNA]</scope>
    <source>
        <strain>ATCC 204508 / S288c</strain>
    </source>
</reference>
<reference key="3">
    <citation type="journal article" date="2014" name="G3 (Bethesda)">
        <title>The reference genome sequence of Saccharomyces cerevisiae: Then and now.</title>
        <authorList>
            <person name="Engel S.R."/>
            <person name="Dietrich F.S."/>
            <person name="Fisk D.G."/>
            <person name="Binkley G."/>
            <person name="Balakrishnan R."/>
            <person name="Costanzo M.C."/>
            <person name="Dwight S.S."/>
            <person name="Hitz B.C."/>
            <person name="Karra K."/>
            <person name="Nash R.S."/>
            <person name="Weng S."/>
            <person name="Wong E.D."/>
            <person name="Lloyd P."/>
            <person name="Skrzypek M.S."/>
            <person name="Miyasato S.R."/>
            <person name="Simison M."/>
            <person name="Cherry J.M."/>
        </authorList>
    </citation>
    <scope>GENOME REANNOTATION</scope>
    <source>
        <strain>ATCC 204508 / S288c</strain>
    </source>
</reference>
<reference key="4">
    <citation type="journal article" date="2003" name="Nature">
        <title>Global analysis of protein expression in yeast.</title>
        <authorList>
            <person name="Ghaemmaghami S."/>
            <person name="Huh W.-K."/>
            <person name="Bower K."/>
            <person name="Howson R.W."/>
            <person name="Belle A."/>
            <person name="Dephoure N."/>
            <person name="O'Shea E.K."/>
            <person name="Weissman J.S."/>
        </authorList>
    </citation>
    <scope>LEVEL OF PROTEIN EXPRESSION [LARGE SCALE ANALYSIS]</scope>
</reference>
<reference key="5">
    <citation type="journal article" date="2006" name="J. Proteome Res.">
        <title>Toward the complete yeast mitochondrial proteome: multidimensional separation techniques for mitochondrial proteomics.</title>
        <authorList>
            <person name="Reinders J."/>
            <person name="Zahedi R.P."/>
            <person name="Pfanner N."/>
            <person name="Meisinger C."/>
            <person name="Sickmann A."/>
        </authorList>
    </citation>
    <scope>SUBCELLULAR LOCATION [LARGE SCALE ANALYSIS]</scope>
    <scope>IDENTIFICATION BY MASS SPECTROMETRY</scope>
</reference>
<sequence>MNIGGGKFLLGRISNNPTSGIVGLANVGKSTFFQAITNSKLGNPANYPFATIDAECAKVNIPSVPLSNLLRIYQSAKCVPGTLTIYDIAGLTRGASQGHGLGNKFLNDIRHVEGIFQVVRGFLKEDITHIEGNVDPVRDLSVVQDELILKDLEFLENIRERLSKKMRMVSKNSKEHQEMKIETELLDALEEHLFNGKKIRHFKDHWNLDEVKILNKHNFLTSKPTLILLNVSPQDYVRNENKFVRNIIEWINEFSPGDKFLLFSAEFESQLMECKGIASEYFDKIKEDTNVSDQQLVSAIPQIILEMRKLLNLISFFTCGPQEVHQWNIREGTTAQEAAGVIHSDLRETFISADVIKYDDLKKMEPPLNESLLKSKGLIKRAGKQYIMQDNDIALFKAAGGKIKK</sequence>
<protein>
    <recommendedName>
        <fullName>Obg-like ATPase homolog</fullName>
        <shortName>OLA1 homolog</shortName>
    </recommendedName>
</protein>
<evidence type="ECO:0000250" key="1"/>
<evidence type="ECO:0000255" key="2">
    <source>
        <dbReference type="PROSITE-ProRule" id="PRU01047"/>
    </source>
</evidence>
<evidence type="ECO:0000255" key="3">
    <source>
        <dbReference type="PROSITE-ProRule" id="PRU01228"/>
    </source>
</evidence>
<evidence type="ECO:0000269" key="4">
    <source>
    </source>
</evidence>
<evidence type="ECO:0000269" key="5">
    <source>
    </source>
</evidence>
<evidence type="ECO:0000305" key="6"/>